<dbReference type="EC" id="2.4.2.4" evidence="1"/>
<dbReference type="EMBL" id="CR628336">
    <property type="protein sequence ID" value="CAH13512.1"/>
    <property type="molecule type" value="Genomic_DNA"/>
</dbReference>
<dbReference type="SMR" id="Q5X2M8"/>
<dbReference type="KEGG" id="lpp:lpp2359"/>
<dbReference type="LegioList" id="lpp2359"/>
<dbReference type="HOGENOM" id="CLU_025040_6_0_6"/>
<dbReference type="GO" id="GO:0005829">
    <property type="term" value="C:cytosol"/>
    <property type="evidence" value="ECO:0007669"/>
    <property type="project" value="TreeGrafter"/>
</dbReference>
<dbReference type="GO" id="GO:0004645">
    <property type="term" value="F:1,4-alpha-oligoglucan phosphorylase activity"/>
    <property type="evidence" value="ECO:0007669"/>
    <property type="project" value="InterPro"/>
</dbReference>
<dbReference type="GO" id="GO:0009032">
    <property type="term" value="F:thymidine phosphorylase activity"/>
    <property type="evidence" value="ECO:0007669"/>
    <property type="project" value="UniProtKB-UniRule"/>
</dbReference>
<dbReference type="GO" id="GO:0006206">
    <property type="term" value="P:pyrimidine nucleobase metabolic process"/>
    <property type="evidence" value="ECO:0007669"/>
    <property type="project" value="InterPro"/>
</dbReference>
<dbReference type="GO" id="GO:0006213">
    <property type="term" value="P:pyrimidine nucleoside metabolic process"/>
    <property type="evidence" value="ECO:0007669"/>
    <property type="project" value="InterPro"/>
</dbReference>
<dbReference type="Gene3D" id="1.20.970.50">
    <property type="match status" value="1"/>
</dbReference>
<dbReference type="Gene3D" id="2.40.40.20">
    <property type="match status" value="1"/>
</dbReference>
<dbReference type="Gene3D" id="3.40.1030.10">
    <property type="entry name" value="Nucleoside phosphorylase/phosphoribosyltransferase catalytic domain"/>
    <property type="match status" value="1"/>
</dbReference>
<dbReference type="Gene3D" id="3.90.1170.30">
    <property type="entry name" value="Pyrimidine nucleoside phosphorylase-like, C-terminal domain"/>
    <property type="match status" value="1"/>
</dbReference>
<dbReference type="HAMAP" id="MF_00703">
    <property type="entry name" value="Thymid_phosp_2"/>
    <property type="match status" value="1"/>
</dbReference>
<dbReference type="InterPro" id="IPR000312">
    <property type="entry name" value="Glycosyl_Trfase_fam3"/>
</dbReference>
<dbReference type="InterPro" id="IPR017459">
    <property type="entry name" value="Glycosyl_Trfase_fam3_N_dom"/>
</dbReference>
<dbReference type="InterPro" id="IPR036320">
    <property type="entry name" value="Glycosyl_Trfase_fam3_N_dom_sf"/>
</dbReference>
<dbReference type="InterPro" id="IPR035902">
    <property type="entry name" value="Nuc_phospho_transferase"/>
</dbReference>
<dbReference type="InterPro" id="IPR036566">
    <property type="entry name" value="PYNP-like_C_sf"/>
</dbReference>
<dbReference type="InterPro" id="IPR013102">
    <property type="entry name" value="PYNP_C"/>
</dbReference>
<dbReference type="InterPro" id="IPR017872">
    <property type="entry name" value="Pyrmidine_PPase_CS"/>
</dbReference>
<dbReference type="InterPro" id="IPR028579">
    <property type="entry name" value="Thym_Pase_Put"/>
</dbReference>
<dbReference type="InterPro" id="IPR013466">
    <property type="entry name" value="Thymidine/AMP_Pase"/>
</dbReference>
<dbReference type="InterPro" id="IPR000053">
    <property type="entry name" value="Thymidine/pyrmidine_PPase"/>
</dbReference>
<dbReference type="NCBIfam" id="TIGR02645">
    <property type="entry name" value="ARCH_P_rylase"/>
    <property type="match status" value="1"/>
</dbReference>
<dbReference type="NCBIfam" id="NF003338">
    <property type="entry name" value="PRK04350.1"/>
    <property type="match status" value="1"/>
</dbReference>
<dbReference type="PANTHER" id="PTHR10515">
    <property type="entry name" value="THYMIDINE PHOSPHORYLASE"/>
    <property type="match status" value="1"/>
</dbReference>
<dbReference type="PANTHER" id="PTHR10515:SF0">
    <property type="entry name" value="THYMIDINE PHOSPHORYLASE"/>
    <property type="match status" value="1"/>
</dbReference>
<dbReference type="Pfam" id="PF02885">
    <property type="entry name" value="Glycos_trans_3N"/>
    <property type="match status" value="1"/>
</dbReference>
<dbReference type="Pfam" id="PF00591">
    <property type="entry name" value="Glycos_transf_3"/>
    <property type="match status" value="1"/>
</dbReference>
<dbReference type="Pfam" id="PF07831">
    <property type="entry name" value="PYNP_C"/>
    <property type="match status" value="1"/>
</dbReference>
<dbReference type="SMART" id="SM00941">
    <property type="entry name" value="PYNP_C"/>
    <property type="match status" value="1"/>
</dbReference>
<dbReference type="SUPFAM" id="SSF52418">
    <property type="entry name" value="Nucleoside phosphorylase/phosphoribosyltransferase catalytic domain"/>
    <property type="match status" value="1"/>
</dbReference>
<dbReference type="SUPFAM" id="SSF47648">
    <property type="entry name" value="Nucleoside phosphorylase/phosphoribosyltransferase N-terminal domain"/>
    <property type="match status" value="1"/>
</dbReference>
<dbReference type="SUPFAM" id="SSF54680">
    <property type="entry name" value="Pyrimidine nucleoside phosphorylase C-terminal domain"/>
    <property type="match status" value="1"/>
</dbReference>
<dbReference type="PROSITE" id="PS00647">
    <property type="entry name" value="THYMID_PHOSPHORYLASE"/>
    <property type="match status" value="1"/>
</dbReference>
<feature type="chain" id="PRO_0000225646" description="Putative thymidine phosphorylase">
    <location>
        <begin position="1"/>
        <end position="517"/>
    </location>
</feature>
<evidence type="ECO:0000255" key="1">
    <source>
        <dbReference type="HAMAP-Rule" id="MF_00703"/>
    </source>
</evidence>
<reference key="1">
    <citation type="journal article" date="2004" name="Nat. Genet.">
        <title>Evidence in the Legionella pneumophila genome for exploitation of host cell functions and high genome plasticity.</title>
        <authorList>
            <person name="Cazalet C."/>
            <person name="Rusniok C."/>
            <person name="Brueggemann H."/>
            <person name="Zidane N."/>
            <person name="Magnier A."/>
            <person name="Ma L."/>
            <person name="Tichit M."/>
            <person name="Jarraud S."/>
            <person name="Bouchier C."/>
            <person name="Vandenesch F."/>
            <person name="Kunst F."/>
            <person name="Etienne J."/>
            <person name="Glaser P."/>
            <person name="Buchrieser C."/>
        </authorList>
    </citation>
    <scope>NUCLEOTIDE SEQUENCE [LARGE SCALE GENOMIC DNA]</scope>
    <source>
        <strain>Paris</strain>
    </source>
</reference>
<keyword id="KW-0328">Glycosyltransferase</keyword>
<keyword id="KW-0808">Transferase</keyword>
<comment type="catalytic activity">
    <reaction evidence="1">
        <text>thymidine + phosphate = 2-deoxy-alpha-D-ribose 1-phosphate + thymine</text>
        <dbReference type="Rhea" id="RHEA:16037"/>
        <dbReference type="ChEBI" id="CHEBI:17748"/>
        <dbReference type="ChEBI" id="CHEBI:17821"/>
        <dbReference type="ChEBI" id="CHEBI:43474"/>
        <dbReference type="ChEBI" id="CHEBI:57259"/>
        <dbReference type="EC" id="2.4.2.4"/>
    </reaction>
</comment>
<comment type="similarity">
    <text evidence="1">Belongs to the thymidine/pyrimidine-nucleoside phosphorylase family. Type 2 subfamily.</text>
</comment>
<accession>Q5X2M8</accession>
<gene>
    <name type="ordered locus">lpp2359</name>
</gene>
<name>TYPH_LEGPA</name>
<organism>
    <name type="scientific">Legionella pneumophila (strain Paris)</name>
    <dbReference type="NCBI Taxonomy" id="297246"/>
    <lineage>
        <taxon>Bacteria</taxon>
        <taxon>Pseudomonadati</taxon>
        <taxon>Pseudomonadota</taxon>
        <taxon>Gammaproteobacteria</taxon>
        <taxon>Legionellales</taxon>
        <taxon>Legionellaceae</taxon>
        <taxon>Legionella</taxon>
    </lineage>
</organism>
<proteinExistence type="inferred from homology"/>
<protein>
    <recommendedName>
        <fullName evidence="1">Putative thymidine phosphorylase</fullName>
        <ecNumber evidence="1">2.4.2.4</ecNumber>
    </recommendedName>
    <alternativeName>
        <fullName evidence="1">TdRPase</fullName>
    </alternativeName>
</protein>
<sequence length="517" mass="55341">MHHSFLSANGGIVVSKQTSHGLRLKHLGIKTYHEAIIYMREDCHVCHSEGFEVQTRIQVTLGQRSIIATLNVVTSELLQPGEAGLSDYAWESLHAKEGDEIQVSHPKPLESLSYVHTKIYGKELSYEQMKVIIDDVLSGRLSDVQISAFLAASSAGRLTRTEIMKLTKAMIDSGDRLSWSSPLVVDKHCVGGLPGNRTTLIVVPIVAAFGLMIPKTSSRAITSPAGTADTMETLAPVHLSPQKMRQVVEQENGCIVWGGAVSLSPADDVLIRVERAIDLDSEGQLVASILSKKIATGATHAVIDIPVGPTAKVRNQSMALLLKQLLEEVGNELGLVVRTLLTDGSQPVGHGIGPSLEARDVMAVLQGLPDAPNDLRERALTLAGAALECSSKVPPGLGKSIATQLLDSGQAFKKFQAICEAQGGMRELTKARFTYPVVAAKAGKVSLIDNRKLAKIAKLAGAPKSKSAGIDLHSHVGESVEKGEPLFTIHSESSGELHYACDLLRDKQDIIILGENS</sequence>